<evidence type="ECO:0000250" key="1"/>
<evidence type="ECO:0000250" key="2">
    <source>
        <dbReference type="UniProtKB" id="Q91YK2"/>
    </source>
</evidence>
<evidence type="ECO:0000256" key="3">
    <source>
        <dbReference type="SAM" id="MobiDB-lite"/>
    </source>
</evidence>
<evidence type="ECO:0000269" key="4">
    <source>
    </source>
</evidence>
<evidence type="ECO:0000269" key="5">
    <source>
    </source>
</evidence>
<evidence type="ECO:0000269" key="6">
    <source>
    </source>
</evidence>
<evidence type="ECO:0000269" key="7">
    <source>
    </source>
</evidence>
<evidence type="ECO:0000269" key="8">
    <source>
    </source>
</evidence>
<evidence type="ECO:0000269" key="9">
    <source>
    </source>
</evidence>
<evidence type="ECO:0000269" key="10">
    <source>
    </source>
</evidence>
<evidence type="ECO:0000269" key="11">
    <source>
    </source>
</evidence>
<evidence type="ECO:0000269" key="12">
    <source>
    </source>
</evidence>
<evidence type="ECO:0000303" key="13">
    <source>
    </source>
</evidence>
<evidence type="ECO:0000305" key="14"/>
<evidence type="ECO:0007744" key="15">
    <source>
    </source>
</evidence>
<evidence type="ECO:0007744" key="16">
    <source>
    </source>
</evidence>
<evidence type="ECO:0007744" key="17">
    <source>
    </source>
</evidence>
<evidence type="ECO:0007744" key="18">
    <source>
    </source>
</evidence>
<evidence type="ECO:0007744" key="19">
    <source>
    </source>
</evidence>
<evidence type="ECO:0007744" key="20">
    <source>
    </source>
</evidence>
<evidence type="ECO:0007744" key="21">
    <source>
    </source>
</evidence>
<evidence type="ECO:0007744" key="22">
    <source>
    </source>
</evidence>
<evidence type="ECO:0007744" key="23">
    <source>
    </source>
</evidence>
<evidence type="ECO:0007744" key="24">
    <source>
    </source>
</evidence>
<evidence type="ECO:0007744" key="25">
    <source>
    </source>
</evidence>
<evidence type="ECO:0007744" key="26">
    <source>
    </source>
</evidence>
<evidence type="ECO:0007829" key="27">
    <source>
        <dbReference type="PDB" id="7T0Y"/>
    </source>
</evidence>
<gene>
    <name type="primary">RRP1B</name>
    <name type="synonym">KIAA0179</name>
</gene>
<protein>
    <recommendedName>
        <fullName>Ribosomal RNA processing protein 1 homolog B</fullName>
    </recommendedName>
    <alternativeName>
        <fullName>RRP1-like protein B</fullName>
    </alternativeName>
</protein>
<comment type="function">
    <text evidence="2 7 8 9">Positively regulates DNA damage-induced apoptosis by acting as a transcriptional coactivator of proapoptotic target genes of the transcriptional activator E2F1 (PubMed:20040599). Likely to play a role in ribosome biogenesis by targeting serine/threonine protein phosphatase PP1 to the nucleolus (PubMed:20926688). Involved in regulation of mRNA splicing (By similarity). Inhibits SIPA1 GTPase activity (By similarity). Involved in regulating expression of extracellular matrix genes (By similarity). Associates with chromatin and may play a role in modulating chromatin structure (PubMed:19710015).</text>
</comment>
<comment type="function">
    <text evidence="11">(Microbial infection) Following influenza A virus (IAV) infection, promotes viral mRNA transcription by facilitating the binding of IAV RNA-directed RNA polymerase to capped mRNA.</text>
</comment>
<comment type="subunit">
    <text evidence="2 7 8 9 10">Interacts with the transcriptional activator E2F1 (PubMed:20040599). Interacts with serine/threonine-protein phosphatase PP1 subunits PPP1CB and PPP1CC but not with PPP1CA (PubMed:20926688). Interacts with 60S ribosomal proteins RPL5 and RPL27, ribosomal processing protein RRP1/NNP1 and other nucleolar proteins including NOP2/NOL1 and FBL (PubMed:20926688). Also interacts with nucleolar protein NPM1/B23 (PubMed:19710015, PubMed:20926688). Interacts with splicing factor SRSF1 and with LUC7L3/CROP (PubMed:23604122). Interacts with GTPase activator SIPA1 (By similarity). Interacts with CBX5/HP1alpha, H1-10, NCL, PARP1, TRIM28 and YBX3 (PubMed:19710015).</text>
</comment>
<comment type="subunit">
    <text evidence="11">(Microbial infection) Interacts with influenza A virus nucleoprotein NP and with RNA-directed RNA polymerase subunits PB1 and PB2.</text>
</comment>
<comment type="interaction">
    <interactant intactId="EBI-372051">
        <id>Q14684</id>
    </interactant>
    <interactant intactId="EBI-448924">
        <id>Q01094</id>
        <label>E2F1</label>
    </interactant>
    <organismsDiffer>false</organismsDiffer>
    <experiments>10</experiments>
</comment>
<comment type="interaction">
    <interactant intactId="EBI-372051">
        <id>Q14684</id>
    </interactant>
    <interactant intactId="EBI-358318">
        <id>P22087</id>
        <label>FBL</label>
    </interactant>
    <organismsDiffer>false</organismsDiffer>
    <experiments>4</experiments>
</comment>
<comment type="interaction">
    <interactant intactId="EBI-372051">
        <id>Q14684</id>
    </interactant>
    <interactant intactId="EBI-357253">
        <id>P62136</id>
        <label>PPP1CA</label>
    </interactant>
    <organismsDiffer>false</organismsDiffer>
    <experiments>3</experiments>
</comment>
<comment type="interaction">
    <interactant intactId="EBI-372051">
        <id>Q14684</id>
    </interactant>
    <interactant intactId="EBI-352350">
        <id>P62140</id>
        <label>PPP1CB</label>
    </interactant>
    <organismsDiffer>false</organismsDiffer>
    <experiments>3</experiments>
</comment>
<comment type="interaction">
    <interactant intactId="EBI-372051">
        <id>Q14684</id>
    </interactant>
    <interactant intactId="EBI-356283">
        <id>P36873</id>
        <label>PPP1CC</label>
    </interactant>
    <organismsDiffer>false</organismsDiffer>
    <experiments>12</experiments>
</comment>
<comment type="interaction">
    <interactant intactId="EBI-372051">
        <id>Q14684</id>
    </interactant>
    <interactant intactId="EBI-352760">
        <id>P61353</id>
        <label>RPL27</label>
    </interactant>
    <organismsDiffer>false</organismsDiffer>
    <experiments>3</experiments>
</comment>
<comment type="interaction">
    <interactant intactId="EBI-372051">
        <id>Q14684</id>
    </interactant>
    <interactant intactId="EBI-358018">
        <id>P46777</id>
        <label>RPL5</label>
    </interactant>
    <organismsDiffer>false</organismsDiffer>
    <experiments>3</experiments>
</comment>
<comment type="interaction">
    <interactant intactId="EBI-372051">
        <id>Q14684</id>
    </interactant>
    <interactant intactId="EBI-2880285">
        <id>P56182</id>
        <label>RRP1</label>
    </interactant>
    <organismsDiffer>false</organismsDiffer>
    <experiments>2</experiments>
</comment>
<comment type="interaction">
    <interactant intactId="EBI-372051">
        <id>Q14684</id>
    </interactant>
    <interactant intactId="EBI-398920">
        <id>Q07955</id>
        <label>SRSF1</label>
    </interactant>
    <organismsDiffer>false</organismsDiffer>
    <experiments>6</experiments>
</comment>
<comment type="interaction">
    <interactant intactId="EBI-5280110">
        <id>Q14684-1</id>
    </interactant>
    <interactant intactId="EBI-302023">
        <id>P62805</id>
        <label>H4C9</label>
    </interactant>
    <organismsDiffer>false</organismsDiffer>
    <experiments>3</experiments>
</comment>
<comment type="interaction">
    <interactant intactId="EBI-5280110">
        <id>Q14684-1</id>
    </interactant>
    <interactant intactId="EBI-355676">
        <id>P09874</id>
        <label>PARP1</label>
    </interactant>
    <organismsDiffer>false</organismsDiffer>
    <experiments>4</experiments>
</comment>
<comment type="subcellular location">
    <subcellularLocation>
        <location evidence="4 8 9 11">Nucleus</location>
        <location evidence="4 8 9 11">Nucleolus</location>
    </subcellularLocation>
    <subcellularLocation>
        <location evidence="9">Nucleus</location>
        <location evidence="9">Nucleoplasm</location>
    </subcellularLocation>
    <subcellularLocation>
        <location evidence="7">Chromosome</location>
    </subcellularLocation>
    <text evidence="7 9">Predominantly located in the nucleolus with a small amount found in the nucleoplasm (PubMed:20926688). Associates with the perichromatin region during metaphase and with cytoplasmic foci during telophase before reaccumulation in the nucleolus during G2 (PubMed:20926688). Associates with heterochromatin and euchromatin (PubMed:19710015).</text>
</comment>
<comment type="subcellular location">
    <subcellularLocation>
        <location evidence="11">Nucleus</location>
        <location evidence="11">Nucleoplasm</location>
    </subcellularLocation>
    <text evidence="11">(Microbial infection) Following infection by influenza A virus, partially translocates from the nucleolus to the nucleoplasm.</text>
</comment>
<comment type="alternative products">
    <event type="alternative splicing"/>
    <isoform>
        <id>Q14684-1</id>
        <name>1</name>
        <sequence type="displayed"/>
    </isoform>
    <isoform>
        <id>Q14684-2</id>
        <name>2</name>
        <sequence type="described" ref="VSP_007801"/>
    </isoform>
</comment>
<comment type="developmental stage">
    <text evidence="8">During the cell cycle, expression peaks at the G1/S transition.</text>
</comment>
<comment type="induction">
    <text evidence="8">By DNA damage.</text>
</comment>
<comment type="PTM">
    <text evidence="1">Citrullinated by PADI4.</text>
</comment>
<comment type="similarity">
    <text evidence="14">Belongs to the RRP1 family.</text>
</comment>
<comment type="sequence caution" evidence="14">
    <conflict type="erroneous initiation">
        <sequence resource="EMBL-CDS" id="BAA11496"/>
    </conflict>
    <text>Extended N-terminus.</text>
</comment>
<reference key="1">
    <citation type="journal article" date="1996" name="DNA Res.">
        <title>Prediction of the coding sequences of unidentified human genes. V. The coding sequences of 40 new genes (KIAA0161-KIAA0200) deduced by analysis of cDNA clones from human cell line KG-1.</title>
        <authorList>
            <person name="Nagase T."/>
            <person name="Seki N."/>
            <person name="Ishikawa K."/>
            <person name="Tanaka A."/>
            <person name="Nomura N."/>
        </authorList>
    </citation>
    <scope>NUCLEOTIDE SEQUENCE [LARGE SCALE MRNA] (ISOFORM 2)</scope>
    <scope>VARIANT PRO-436</scope>
    <source>
        <tissue>Bone marrow</tissue>
    </source>
</reference>
<reference key="2">
    <citation type="journal article" date="2000" name="Nature">
        <title>The DNA sequence of human chromosome 21.</title>
        <authorList>
            <person name="Hattori M."/>
            <person name="Fujiyama A."/>
            <person name="Taylor T.D."/>
            <person name="Watanabe H."/>
            <person name="Yada T."/>
            <person name="Park H.-S."/>
            <person name="Toyoda A."/>
            <person name="Ishii K."/>
            <person name="Totoki Y."/>
            <person name="Choi D.-K."/>
            <person name="Groner Y."/>
            <person name="Soeda E."/>
            <person name="Ohki M."/>
            <person name="Takagi T."/>
            <person name="Sakaki Y."/>
            <person name="Taudien S."/>
            <person name="Blechschmidt K."/>
            <person name="Polley A."/>
            <person name="Menzel U."/>
            <person name="Delabar J."/>
            <person name="Kumpf K."/>
            <person name="Lehmann R."/>
            <person name="Patterson D."/>
            <person name="Reichwald K."/>
            <person name="Rump A."/>
            <person name="Schillhabel M."/>
            <person name="Schudy A."/>
            <person name="Zimmermann W."/>
            <person name="Rosenthal A."/>
            <person name="Kudoh J."/>
            <person name="Shibuya K."/>
            <person name="Kawasaki K."/>
            <person name="Asakawa S."/>
            <person name="Shintani A."/>
            <person name="Sasaki T."/>
            <person name="Nagamine K."/>
            <person name="Mitsuyama S."/>
            <person name="Antonarakis S.E."/>
            <person name="Minoshima S."/>
            <person name="Shimizu N."/>
            <person name="Nordsiek G."/>
            <person name="Hornischer K."/>
            <person name="Brandt P."/>
            <person name="Scharfe M."/>
            <person name="Schoen O."/>
            <person name="Desario A."/>
            <person name="Reichelt J."/>
            <person name="Kauer G."/>
            <person name="Bloecker H."/>
            <person name="Ramser J."/>
            <person name="Beck A."/>
            <person name="Klages S."/>
            <person name="Hennig S."/>
            <person name="Riesselmann L."/>
            <person name="Dagand E."/>
            <person name="Wehrmeyer S."/>
            <person name="Borzym K."/>
            <person name="Gardiner K."/>
            <person name="Nizetic D."/>
            <person name="Francis F."/>
            <person name="Lehrach H."/>
            <person name="Reinhardt R."/>
            <person name="Yaspo M.-L."/>
        </authorList>
    </citation>
    <scope>NUCLEOTIDE SEQUENCE [LARGE SCALE GENOMIC DNA]</scope>
</reference>
<reference key="3">
    <citation type="journal article" date="2004" name="Genome Res.">
        <title>The status, quality, and expansion of the NIH full-length cDNA project: the Mammalian Gene Collection (MGC).</title>
        <authorList>
            <consortium name="The MGC Project Team"/>
        </authorList>
    </citation>
    <scope>NUCLEOTIDE SEQUENCE [LARGE SCALE MRNA] (ISOFORM 1)</scope>
    <scope>VARIANT PRO-436</scope>
    <source>
        <tissue>Testis</tissue>
    </source>
</reference>
<reference key="4">
    <citation type="journal article" date="2002" name="Mol. Biol. Cell">
        <title>Functional proteomic analysis of human nucleolus.</title>
        <authorList>
            <person name="Scherl A."/>
            <person name="Coute Y."/>
            <person name="Deon C."/>
            <person name="Calle A."/>
            <person name="Kindbeiter K."/>
            <person name="Sanchez J.-C."/>
            <person name="Greco A."/>
            <person name="Hochstrasser D.F."/>
            <person name="Diaz J.-J."/>
        </authorList>
    </citation>
    <scope>SUBCELLULAR LOCATION [LARGE SCALE ANALYSIS]</scope>
    <source>
        <tissue>Cervix carcinoma</tissue>
    </source>
</reference>
<reference key="5">
    <citation type="journal article" date="2006" name="Cell">
        <title>Global, in vivo, and site-specific phosphorylation dynamics in signaling networks.</title>
        <authorList>
            <person name="Olsen J.V."/>
            <person name="Blagoev B."/>
            <person name="Gnad F."/>
            <person name="Macek B."/>
            <person name="Kumar C."/>
            <person name="Mortensen P."/>
            <person name="Mann M."/>
        </authorList>
    </citation>
    <scope>PHOSPHORYLATION [LARGE SCALE ANALYSIS] AT SER-245</scope>
    <scope>IDENTIFICATION BY MASS SPECTROMETRY [LARGE SCALE ANALYSIS]</scope>
    <source>
        <tissue>Cervix carcinoma</tissue>
    </source>
</reference>
<reference key="6">
    <citation type="journal article" date="2006" name="Nat. Biotechnol.">
        <title>A probability-based approach for high-throughput protein phosphorylation analysis and site localization.</title>
        <authorList>
            <person name="Beausoleil S.A."/>
            <person name="Villen J."/>
            <person name="Gerber S.A."/>
            <person name="Rush J."/>
            <person name="Gygi S.P."/>
        </authorList>
    </citation>
    <scope>PHOSPHORYLATION [LARGE SCALE ANALYSIS] AT SER-392 AND SER-513</scope>
    <scope>IDENTIFICATION BY MASS SPECTROMETRY [LARGE SCALE ANALYSIS]</scope>
    <source>
        <tissue>Cervix carcinoma</tissue>
    </source>
</reference>
<reference key="7">
    <citation type="journal article" date="2008" name="J. Proteome Res.">
        <title>Combining protein-based IMAC, peptide-based IMAC, and MudPIT for efficient phosphoproteomic analysis.</title>
        <authorList>
            <person name="Cantin G.T."/>
            <person name="Yi W."/>
            <person name="Lu B."/>
            <person name="Park S.K."/>
            <person name="Xu T."/>
            <person name="Lee J.-D."/>
            <person name="Yates J.R. III"/>
        </authorList>
    </citation>
    <scope>PHOSPHORYLATION [LARGE SCALE ANALYSIS] AT SER-245</scope>
    <scope>IDENTIFICATION BY MASS SPECTROMETRY [LARGE SCALE ANALYSIS]</scope>
    <source>
        <tissue>Cervix carcinoma</tissue>
    </source>
</reference>
<reference key="8">
    <citation type="journal article" date="2008" name="Mol. Cell">
        <title>Kinase-selective enrichment enables quantitative phosphoproteomics of the kinome across the cell cycle.</title>
        <authorList>
            <person name="Daub H."/>
            <person name="Olsen J.V."/>
            <person name="Bairlein M."/>
            <person name="Gnad F."/>
            <person name="Oppermann F.S."/>
            <person name="Korner R."/>
            <person name="Greff Z."/>
            <person name="Keri G."/>
            <person name="Stemmann O."/>
            <person name="Mann M."/>
        </authorList>
    </citation>
    <scope>PHOSPHORYLATION [LARGE SCALE ANALYSIS] AT SER-245</scope>
    <scope>IDENTIFICATION BY MASS SPECTROMETRY [LARGE SCALE ANALYSIS]</scope>
    <source>
        <tissue>Cervix carcinoma</tissue>
    </source>
</reference>
<reference key="9">
    <citation type="journal article" date="2008" name="Proc. Natl. Acad. Sci. U.S.A.">
        <title>A quantitative atlas of mitotic phosphorylation.</title>
        <authorList>
            <person name="Dephoure N."/>
            <person name="Zhou C."/>
            <person name="Villen J."/>
            <person name="Beausoleil S.A."/>
            <person name="Bakalarski C.E."/>
            <person name="Elledge S.J."/>
            <person name="Gygi S.P."/>
        </authorList>
    </citation>
    <scope>PHOSPHORYLATION [LARGE SCALE ANALYSIS] AT SER-245; SER-350; SER-392; SER-394; SER-395; SER-452; SER-458; SER-702; SER-706; SER-732 AND SER-736</scope>
    <scope>IDENTIFICATION BY MASS SPECTROMETRY [LARGE SCALE ANALYSIS]</scope>
    <source>
        <tissue>Cervix carcinoma</tissue>
    </source>
</reference>
<reference key="10">
    <citation type="journal article" date="2009" name="Anal. Chem.">
        <title>Lys-N and trypsin cover complementary parts of the phosphoproteome in a refined SCX-based approach.</title>
        <authorList>
            <person name="Gauci S."/>
            <person name="Helbig A.O."/>
            <person name="Slijper M."/>
            <person name="Krijgsveld J."/>
            <person name="Heck A.J."/>
            <person name="Mohammed S."/>
        </authorList>
    </citation>
    <scope>IDENTIFICATION BY MASS SPECTROMETRY [LARGE SCALE ANALYSIS]</scope>
</reference>
<reference key="11">
    <citation type="journal article" date="2009" name="J. Biol. Chem.">
        <title>The metastasis efficiency modifier ribosomal RNA processing 1 homolog B (RRP1B) is a chromatin-associated factor.</title>
        <authorList>
            <person name="Crawford N.P."/>
            <person name="Yang H."/>
            <person name="Mattaini K.R."/>
            <person name="Hunter K.W."/>
        </authorList>
    </citation>
    <scope>FUNCTION</scope>
    <scope>INTERACTION WITH CBX5; H1-10; NCL; NPM1; PARP1; TRIM28 AND YBX3</scope>
    <scope>SUBCELLULAR LOCATION</scope>
</reference>
<reference key="12">
    <citation type="journal article" date="2009" name="Sci. Signal.">
        <title>Quantitative phosphoproteomic analysis of T cell receptor signaling reveals system-wide modulation of protein-protein interactions.</title>
        <authorList>
            <person name="Mayya V."/>
            <person name="Lundgren D.H."/>
            <person name="Hwang S.-I."/>
            <person name="Rezaul K."/>
            <person name="Wu L."/>
            <person name="Eng J.K."/>
            <person name="Rodionov V."/>
            <person name="Han D.K."/>
        </authorList>
    </citation>
    <scope>PHOSPHORYLATION [LARGE SCALE ANALYSIS] AT SER-245; SER-350; SER-732 AND SER-735</scope>
    <scope>IDENTIFICATION BY MASS SPECTROMETRY [LARGE SCALE ANALYSIS]</scope>
    <source>
        <tissue>Leukemic T-cell</tissue>
    </source>
</reference>
<reference key="13">
    <citation type="journal article" date="2009" name="Science">
        <title>Lysine acetylation targets protein complexes and co-regulates major cellular functions.</title>
        <authorList>
            <person name="Choudhary C."/>
            <person name="Kumar C."/>
            <person name="Gnad F."/>
            <person name="Nielsen M.L."/>
            <person name="Rehman M."/>
            <person name="Walther T.C."/>
            <person name="Olsen J.V."/>
            <person name="Mann M."/>
        </authorList>
    </citation>
    <scope>ACETYLATION [LARGE SCALE ANALYSIS] AT LYS-652</scope>
    <scope>IDENTIFICATION BY MASS SPECTROMETRY [LARGE SCALE ANALYSIS]</scope>
</reference>
<reference key="14">
    <citation type="journal article" date="2010" name="J. Biol. Chem.">
        <title>Regulation of E2F1-induced apoptosis by the nucleolar protein RRP1B.</title>
        <authorList>
            <person name="Paik J.C."/>
            <person name="Wang B."/>
            <person name="Liu K."/>
            <person name="Lue J.K."/>
            <person name="Lin W.C."/>
        </authorList>
    </citation>
    <scope>FUNCTION</scope>
    <scope>INTERACTION WITH E2F1</scope>
    <scope>SUBCELLULAR LOCATION</scope>
    <scope>DEVELOPMENTAL STAGE</scope>
    <scope>INDUCTION</scope>
</reference>
<reference key="15">
    <citation type="journal article" date="2010" name="Mol. Biol. Cell">
        <title>RRP1B targets PP1 to mammalian cell nucleoli and is associated with pre-60S ribosomal subunits.</title>
        <authorList>
            <person name="Chamousset D."/>
            <person name="De Wever V."/>
            <person name="Moorhead G.B."/>
            <person name="Chen Y."/>
            <person name="Boisvert F.M."/>
            <person name="Lamond A.I."/>
            <person name="Trinkle-Mulcahy L."/>
        </authorList>
    </citation>
    <scope>FUNCTION</scope>
    <scope>INTERACTION WITH FBL; NOP2; RPL5; RPL27; RRP1; PPP1CB AND PPP1CC</scope>
    <scope>SUBCELLULAR LOCATION</scope>
    <scope>MUTAGENESIS OF VAL-684 AND PHE-686</scope>
</reference>
<reference key="16">
    <citation type="journal article" date="2010" name="Sci. Signal.">
        <title>Quantitative phosphoproteomics reveals widespread full phosphorylation site occupancy during mitosis.</title>
        <authorList>
            <person name="Olsen J.V."/>
            <person name="Vermeulen M."/>
            <person name="Santamaria A."/>
            <person name="Kumar C."/>
            <person name="Miller M.L."/>
            <person name="Jensen L.J."/>
            <person name="Gnad F."/>
            <person name="Cox J."/>
            <person name="Jensen T.S."/>
            <person name="Nigg E.A."/>
            <person name="Brunak S."/>
            <person name="Mann M."/>
        </authorList>
    </citation>
    <scope>PHOSPHORYLATION [LARGE SCALE ANALYSIS] AT SER-245; SER-350; SER-513; SER-702; SER-706; SER-732 AND SER-735</scope>
    <scope>IDENTIFICATION BY MASS SPECTROMETRY [LARGE SCALE ANALYSIS]</scope>
    <source>
        <tissue>Cervix carcinoma</tissue>
    </source>
</reference>
<reference key="17">
    <citation type="journal article" date="2011" name="Sci. Signal.">
        <title>System-wide temporal characterization of the proteome and phosphoproteome of human embryonic stem cell differentiation.</title>
        <authorList>
            <person name="Rigbolt K.T."/>
            <person name="Prokhorova T.A."/>
            <person name="Akimov V."/>
            <person name="Henningsen J."/>
            <person name="Johansen P.T."/>
            <person name="Kratchmarova I."/>
            <person name="Kassem M."/>
            <person name="Mann M."/>
            <person name="Olsen J.V."/>
            <person name="Blagoev B."/>
        </authorList>
    </citation>
    <scope>PHOSPHORYLATION [LARGE SCALE ANALYSIS] AT SER-245; SER-513; SER-706; THR-728 AND SER-732</scope>
    <scope>IDENTIFICATION BY MASS SPECTROMETRY [LARGE SCALE ANALYSIS]</scope>
</reference>
<reference key="18">
    <citation type="journal article" date="2012" name="Proc. Natl. Acad. Sci. U.S.A.">
        <title>N-terminal acetylome analyses and functional insights of the N-terminal acetyltransferase NatB.</title>
        <authorList>
            <person name="Van Damme P."/>
            <person name="Lasa M."/>
            <person name="Polevoda B."/>
            <person name="Gazquez C."/>
            <person name="Elosegui-Artola A."/>
            <person name="Kim D.S."/>
            <person name="De Juan-Pardo E."/>
            <person name="Demeyer K."/>
            <person name="Hole K."/>
            <person name="Larrea E."/>
            <person name="Timmerman E."/>
            <person name="Prieto J."/>
            <person name="Arnesen T."/>
            <person name="Sherman F."/>
            <person name="Gevaert K."/>
            <person name="Aldabe R."/>
        </authorList>
    </citation>
    <scope>IDENTIFICATION BY MASS SPECTROMETRY [LARGE SCALE ANALYSIS]</scope>
</reference>
<reference key="19">
    <citation type="journal article" date="2013" name="J. Proteome Res.">
        <title>Toward a comprehensive characterization of a human cancer cell phosphoproteome.</title>
        <authorList>
            <person name="Zhou H."/>
            <person name="Di Palma S."/>
            <person name="Preisinger C."/>
            <person name="Peng M."/>
            <person name="Polat A.N."/>
            <person name="Heck A.J."/>
            <person name="Mohammed S."/>
        </authorList>
    </citation>
    <scope>PHOSPHORYLATION [LARGE SCALE ANALYSIS] AT SER-245; SER-392; SER-513; SER-579; SER-706 AND SER-732</scope>
    <scope>IDENTIFICATION BY MASS SPECTROMETRY [LARGE SCALE ANALYSIS]</scope>
    <source>
        <tissue>Cervix carcinoma</tissue>
        <tissue>Erythroleukemia</tissue>
    </source>
</reference>
<reference key="20">
    <citation type="journal article" date="2014" name="J. Proteomics">
        <title>An enzyme assisted RP-RPLC approach for in-depth analysis of human liver phosphoproteome.</title>
        <authorList>
            <person name="Bian Y."/>
            <person name="Song C."/>
            <person name="Cheng K."/>
            <person name="Dong M."/>
            <person name="Wang F."/>
            <person name="Huang J."/>
            <person name="Sun D."/>
            <person name="Wang L."/>
            <person name="Ye M."/>
            <person name="Zou H."/>
        </authorList>
    </citation>
    <scope>PHOSPHORYLATION [LARGE SCALE ANALYSIS] AT SER-350</scope>
    <scope>IDENTIFICATION BY MASS SPECTROMETRY [LARGE SCALE ANALYSIS]</scope>
    <source>
        <tissue>Liver</tissue>
    </source>
</reference>
<reference key="21">
    <citation type="journal article" date="2014" name="Oncogene">
        <title>RRP1B is a metastasis modifier that regulates the expression of alternative mRNA isoforms through interactions with SRSF1.</title>
        <authorList>
            <consortium name="NISC Comparative Sequencing Program"/>
            <person name="Lee M."/>
            <person name="Dworkin A.M."/>
            <person name="Gildea D."/>
            <person name="Trivedi N.S."/>
            <person name="Moorhead G.B."/>
            <person name="Crawford N.P."/>
        </authorList>
    </citation>
    <scope>INTERACTION WITH LUC7L3 AND SRSF1</scope>
</reference>
<reference key="22">
    <citation type="journal article" date="2015" name="J. Virol.">
        <title>A nucleolar protein, ribosomal RNA processing 1 homolog B (RRP1B), enhances the recruitment of cellular mRNA in influenza virus transcription.</title>
        <authorList>
            <person name="Su W.C."/>
            <person name="Hsu S.F."/>
            <person name="Lee Y.Y."/>
            <person name="Jeng K.S."/>
            <person name="Lai M.M."/>
        </authorList>
    </citation>
    <scope>FUNCTION (MICROBIAL INFECTION)</scope>
    <scope>SUBCELLULAR LOCATION</scope>
    <scope>INTERACTION WITH INFLUENZA A VIRUS NP; PB1 AND PB2</scope>
</reference>
<reference key="23">
    <citation type="journal article" date="2007" name="PLoS Genet.">
        <title>Rrp1b, a new candidate susceptibility gene for breast cancer progression and metastasis.</title>
        <authorList>
            <person name="Crawford N.P."/>
            <person name="Qian X."/>
            <person name="Ziogas A."/>
            <person name="Papageorge A.G."/>
            <person name="Boersma B.J."/>
            <person name="Walker R.C."/>
            <person name="Lukes L."/>
            <person name="Rowe W.L."/>
            <person name="Zhang J."/>
            <person name="Ambs S."/>
            <person name="Lowy D.R."/>
            <person name="Anton-Culver H."/>
            <person name="Hunter K.W."/>
        </authorList>
    </citation>
    <scope>VARIANT PRO-436</scope>
</reference>
<reference key="24">
    <citation type="journal article" date="2011" name="BMC Syst. Biol.">
        <title>Initial characterization of the human central proteome.</title>
        <authorList>
            <person name="Burkard T.R."/>
            <person name="Planyavsky M."/>
            <person name="Kaupe I."/>
            <person name="Breitwieser F.P."/>
            <person name="Buerckstuemmer T."/>
            <person name="Bennett K.L."/>
            <person name="Superti-Furga G."/>
            <person name="Colinge J."/>
        </authorList>
    </citation>
    <scope>VARIANT [LARGE SCALE ANALYSIS] PRO-436</scope>
    <scope>IDENTIFICATION BY MASS SPECTROMETRY [LARGE SCALE ANALYSIS]</scope>
</reference>
<keyword id="KW-0002">3D-structure</keyword>
<keyword id="KW-0007">Acetylation</keyword>
<keyword id="KW-0010">Activator</keyword>
<keyword id="KW-0025">Alternative splicing</keyword>
<keyword id="KW-0053">Apoptosis</keyword>
<keyword id="KW-0158">Chromosome</keyword>
<keyword id="KW-0164">Citrullination</keyword>
<keyword id="KW-0945">Host-virus interaction</keyword>
<keyword id="KW-0507">mRNA processing</keyword>
<keyword id="KW-0508">mRNA splicing</keyword>
<keyword id="KW-0539">Nucleus</keyword>
<keyword id="KW-0597">Phosphoprotein</keyword>
<keyword id="KW-1267">Proteomics identification</keyword>
<keyword id="KW-1185">Reference proteome</keyword>
<keyword id="KW-0804">Transcription</keyword>
<keyword id="KW-0805">Transcription regulation</keyword>
<feature type="chain" id="PRO_0000050729" description="Ribosomal RNA processing protein 1 homolog B">
    <location>
        <begin position="1"/>
        <end position="758"/>
    </location>
</feature>
<feature type="region of interest" description="Disordered" evidence="3">
    <location>
        <begin position="259"/>
        <end position="285"/>
    </location>
</feature>
<feature type="region of interest" description="Disordered" evidence="3">
    <location>
        <begin position="381"/>
        <end position="598"/>
    </location>
</feature>
<feature type="region of interest" description="Disordered" evidence="3">
    <location>
        <begin position="660"/>
        <end position="681"/>
    </location>
</feature>
<feature type="region of interest" description="Disordered" evidence="3">
    <location>
        <begin position="707"/>
        <end position="758"/>
    </location>
</feature>
<feature type="compositionally biased region" description="Basic residues" evidence="3">
    <location>
        <begin position="259"/>
        <end position="272"/>
    </location>
</feature>
<feature type="compositionally biased region" description="Basic and acidic residues" evidence="3">
    <location>
        <begin position="273"/>
        <end position="285"/>
    </location>
</feature>
<feature type="compositionally biased region" description="Basic residues" evidence="3">
    <location>
        <begin position="397"/>
        <end position="408"/>
    </location>
</feature>
<feature type="compositionally biased region" description="Low complexity" evidence="3">
    <location>
        <begin position="447"/>
        <end position="457"/>
    </location>
</feature>
<feature type="compositionally biased region" description="Basic residues" evidence="3">
    <location>
        <begin position="469"/>
        <end position="481"/>
    </location>
</feature>
<feature type="compositionally biased region" description="Low complexity" evidence="3">
    <location>
        <begin position="498"/>
        <end position="513"/>
    </location>
</feature>
<feature type="compositionally biased region" description="Basic residues" evidence="3">
    <location>
        <begin position="566"/>
        <end position="575"/>
    </location>
</feature>
<feature type="modified residue" description="Phosphoserine" evidence="16 17 18 19 21 22 24 25">
    <location>
        <position position="245"/>
    </location>
</feature>
<feature type="modified residue" description="Phosphoserine" evidence="18 21 22 26">
    <location>
        <position position="350"/>
    </location>
</feature>
<feature type="modified residue" description="Phosphoserine" evidence="15 18 25">
    <location>
        <position position="392"/>
    </location>
</feature>
<feature type="modified residue" description="Phosphoserine" evidence="18">
    <location>
        <position position="394"/>
    </location>
</feature>
<feature type="modified residue" description="Phosphoserine" evidence="18">
    <location>
        <position position="395"/>
    </location>
</feature>
<feature type="modified residue" description="Phosphoserine" evidence="18">
    <location>
        <position position="452"/>
    </location>
</feature>
<feature type="modified residue" description="Phosphoserine" evidence="18">
    <location>
        <position position="458"/>
    </location>
</feature>
<feature type="modified residue" description="Phosphoserine" evidence="15 22 24 25">
    <location>
        <position position="513"/>
    </location>
</feature>
<feature type="modified residue" description="Phosphoserine" evidence="25">
    <location>
        <position position="579"/>
    </location>
</feature>
<feature type="modified residue" description="N6-acetyllysine" evidence="20">
    <location>
        <position position="652"/>
    </location>
</feature>
<feature type="modified residue" description="Phosphoserine" evidence="18 22">
    <location>
        <position position="702"/>
    </location>
</feature>
<feature type="modified residue" description="Phosphoserine" evidence="18 22 24 25">
    <location>
        <position position="706"/>
    </location>
</feature>
<feature type="modified residue" description="Citrulline" evidence="1">
    <location>
        <position position="712"/>
    </location>
</feature>
<feature type="modified residue" description="Phosphothreonine" evidence="24">
    <location>
        <position position="728"/>
    </location>
</feature>
<feature type="modified residue" description="Phosphoserine" evidence="18 21 22 24 25">
    <location>
        <position position="732"/>
    </location>
</feature>
<feature type="modified residue" description="Phosphoserine" evidence="21 22">
    <location>
        <position position="735"/>
    </location>
</feature>
<feature type="modified residue" description="Phosphoserine" evidence="18">
    <location>
        <position position="736"/>
    </location>
</feature>
<feature type="splice variant" id="VSP_007801" description="In isoform 2." evidence="13">
    <location>
        <begin position="51"/>
        <end position="68"/>
    </location>
</feature>
<feature type="sequence variant" id="VAR_079135" description="In dbSNP:rs9306160." evidence="5 6 12 23">
    <original>L</original>
    <variation>P</variation>
    <location>
        <position position="436"/>
    </location>
</feature>
<feature type="mutagenesis site" description="Abolishes interaction with protein phosphatase PP1 subunits PPP1CB and PPP1CC; when associated with A-686." evidence="9">
    <original>V</original>
    <variation>A</variation>
    <location>
        <position position="684"/>
    </location>
</feature>
<feature type="mutagenesis site" description="Abolishes interaction with protein phosphatase PP1 subunits PPP1CB and PPP1CC; when associated with A-684." evidence="9">
    <original>F</original>
    <variation>A</variation>
    <location>
        <position position="686"/>
    </location>
</feature>
<feature type="helix" evidence="27">
    <location>
        <begin position="688"/>
        <end position="690"/>
    </location>
</feature>
<feature type="strand" evidence="27">
    <location>
        <begin position="692"/>
        <end position="696"/>
    </location>
</feature>
<feature type="helix" evidence="27">
    <location>
        <begin position="702"/>
        <end position="705"/>
    </location>
</feature>
<organism>
    <name type="scientific">Homo sapiens</name>
    <name type="common">Human</name>
    <dbReference type="NCBI Taxonomy" id="9606"/>
    <lineage>
        <taxon>Eukaryota</taxon>
        <taxon>Metazoa</taxon>
        <taxon>Chordata</taxon>
        <taxon>Craniata</taxon>
        <taxon>Vertebrata</taxon>
        <taxon>Euteleostomi</taxon>
        <taxon>Mammalia</taxon>
        <taxon>Eutheria</taxon>
        <taxon>Euarchontoglires</taxon>
        <taxon>Primates</taxon>
        <taxon>Haplorrhini</taxon>
        <taxon>Catarrhini</taxon>
        <taxon>Hominidae</taxon>
        <taxon>Homo</taxon>
    </lineage>
</organism>
<accession>Q14684</accession>
<accession>Q8TBZ4</accession>
<sequence>MAPAMQPAEIQFAQRLASSEKGIRDRAVKKLRQYISVKTQRETGGFSQEELLKIWKGLFYCMWVQDEPLLQEELANTIAQLVHAVNNSAAQHLFIQTFWQTMNREWKGIDRLRLDKYYMLIRLVLRQSFEVLKRNGWEESRIKVFLDVLMKEVLCPESQSPNGVRFHFIDIYLDELSKVGGKELLADQNLKFIDPFCKIAAKTKDHTLVQTIARGVFEAIVDQSPFVPEETMEEQKTKVGDGDLSAEEIPENEVSLRRAVSKKKTALGKNHSRKDGLSDERGRDDCGTFEDTGPLLQFDYKAVADRLLEMTSRKNTPHFNRKRLSKLIKKFQDLSEGSSISQLSFAEDISADEDDQILSQGKHKKKGNKLLEKTNLEKEKGSRVFCVEEEDSESSLQKRRRKKKKKHHLQPENPGPGGAAPSLEQNRGREPEASGLKALKARVAEPGAEATSSTGEESGSEHPPAVPMHNKRKRPRKKSPRAHREMLESAVLPPEDMSQSGPSGSHPQGPRGSPTGGAQLLKRKRKLGVVPVNGSGLSTPAWPPLQQEGPPTGPAEGANSHTTLPQRRRLQKKKAGPGSLELCGLPSQKTASLKKRKKMRVMSNLVEHNGVLESEAGQPQALGSSGTCSSLKKQKLRAESDFVKFDTPFLPKPLFFRRAKSSTATHPPGPAVQLNKTPSSSKKVTFGLNRNMTAEFKKTDKSILVSPTGPSRVAFDPEQKPLHGVLKTPTSSPASSPLVAKKPLTTTPRRRPRAMDFF</sequence>
<dbReference type="EMBL" id="D80001">
    <property type="protein sequence ID" value="BAA11496.1"/>
    <property type="status" value="ALT_INIT"/>
    <property type="molecule type" value="mRNA"/>
</dbReference>
<dbReference type="EMBL" id="AP001052">
    <property type="status" value="NOT_ANNOTATED_CDS"/>
    <property type="molecule type" value="Genomic_DNA"/>
</dbReference>
<dbReference type="EMBL" id="BC028386">
    <property type="protein sequence ID" value="AAH28386.1"/>
    <property type="molecule type" value="mRNA"/>
</dbReference>
<dbReference type="CCDS" id="CCDS33577.1">
    <molecule id="Q14684-1"/>
</dbReference>
<dbReference type="RefSeq" id="NP_055871.1">
    <molecule id="Q14684-1"/>
    <property type="nucleotide sequence ID" value="NM_015056.3"/>
</dbReference>
<dbReference type="PDB" id="7T0Y">
    <property type="method" value="X-ray"/>
    <property type="resolution" value="1.80 A"/>
    <property type="chains" value="B/D=682-727"/>
</dbReference>
<dbReference type="PDBsum" id="7T0Y"/>
<dbReference type="SMR" id="Q14684"/>
<dbReference type="BioGRID" id="116708">
    <property type="interactions" value="341"/>
</dbReference>
<dbReference type="FunCoup" id="Q14684">
    <property type="interactions" value="4017"/>
</dbReference>
<dbReference type="IntAct" id="Q14684">
    <property type="interactions" value="550"/>
</dbReference>
<dbReference type="MINT" id="Q14684"/>
<dbReference type="STRING" id="9606.ENSP00000339145"/>
<dbReference type="GlyConnect" id="2857">
    <property type="glycosylation" value="1 O-GlcNAc glycan (1 site)"/>
</dbReference>
<dbReference type="GlyCosmos" id="Q14684">
    <property type="glycosylation" value="6 sites, 1 glycan"/>
</dbReference>
<dbReference type="GlyGen" id="Q14684">
    <property type="glycosylation" value="10 sites, 1 O-linked glycan (10 sites)"/>
</dbReference>
<dbReference type="iPTMnet" id="Q14684"/>
<dbReference type="MetOSite" id="Q14684"/>
<dbReference type="PhosphoSitePlus" id="Q14684"/>
<dbReference type="SwissPalm" id="Q14684"/>
<dbReference type="BioMuta" id="RRP1B"/>
<dbReference type="DMDM" id="296452976"/>
<dbReference type="jPOST" id="Q14684"/>
<dbReference type="MassIVE" id="Q14684"/>
<dbReference type="PaxDb" id="9606-ENSP00000339145"/>
<dbReference type="PeptideAtlas" id="Q14684"/>
<dbReference type="ProteomicsDB" id="60118">
    <molecule id="Q14684-1"/>
</dbReference>
<dbReference type="ProteomicsDB" id="60119">
    <molecule id="Q14684-2"/>
</dbReference>
<dbReference type="Pumba" id="Q14684"/>
<dbReference type="Antibodypedia" id="9978">
    <property type="antibodies" value="90 antibodies from 18 providers"/>
</dbReference>
<dbReference type="DNASU" id="23076"/>
<dbReference type="Ensembl" id="ENST00000340648.6">
    <molecule id="Q14684-1"/>
    <property type="protein sequence ID" value="ENSP00000339145.4"/>
    <property type="gene ID" value="ENSG00000160208.13"/>
</dbReference>
<dbReference type="GeneID" id="23076"/>
<dbReference type="KEGG" id="hsa:23076"/>
<dbReference type="MANE-Select" id="ENST00000340648.6">
    <property type="protein sequence ID" value="ENSP00000339145.4"/>
    <property type="RefSeq nucleotide sequence ID" value="NM_015056.3"/>
    <property type="RefSeq protein sequence ID" value="NP_055871.1"/>
</dbReference>
<dbReference type="UCSC" id="uc002zdk.4">
    <molecule id="Q14684-1"/>
    <property type="organism name" value="human"/>
</dbReference>
<dbReference type="AGR" id="HGNC:23818"/>
<dbReference type="CTD" id="23076"/>
<dbReference type="DisGeNET" id="23076"/>
<dbReference type="GeneCards" id="RRP1B"/>
<dbReference type="HGNC" id="HGNC:23818">
    <property type="gene designation" value="RRP1B"/>
</dbReference>
<dbReference type="HPA" id="ENSG00000160208">
    <property type="expression patterns" value="Low tissue specificity"/>
</dbReference>
<dbReference type="MIM" id="610654">
    <property type="type" value="gene"/>
</dbReference>
<dbReference type="neXtProt" id="NX_Q14684"/>
<dbReference type="OpenTargets" id="ENSG00000160208"/>
<dbReference type="PharmGKB" id="PA162402138"/>
<dbReference type="VEuPathDB" id="HostDB:ENSG00000160208"/>
<dbReference type="eggNOG" id="KOG3911">
    <property type="taxonomic scope" value="Eukaryota"/>
</dbReference>
<dbReference type="GeneTree" id="ENSGT00390000011821"/>
<dbReference type="HOGENOM" id="CLU_022876_3_0_1"/>
<dbReference type="InParanoid" id="Q14684"/>
<dbReference type="OMA" id="PPALYCK"/>
<dbReference type="OrthoDB" id="2019504at2759"/>
<dbReference type="PAN-GO" id="Q14684">
    <property type="GO annotations" value="3 GO annotations based on evolutionary models"/>
</dbReference>
<dbReference type="PhylomeDB" id="Q14684"/>
<dbReference type="TreeFam" id="TF315294"/>
<dbReference type="PathwayCommons" id="Q14684"/>
<dbReference type="SignaLink" id="Q14684"/>
<dbReference type="BioGRID-ORCS" id="23076">
    <property type="hits" value="14 hits in 1159 CRISPR screens"/>
</dbReference>
<dbReference type="CD-CODE" id="232F8A39">
    <property type="entry name" value="P-body"/>
</dbReference>
<dbReference type="CD-CODE" id="91857CE7">
    <property type="entry name" value="Nucleolus"/>
</dbReference>
<dbReference type="ChiTaRS" id="RRP1B">
    <property type="organism name" value="human"/>
</dbReference>
<dbReference type="GeneWiki" id="RRP1B"/>
<dbReference type="GenomeRNAi" id="23076"/>
<dbReference type="Pharos" id="Q14684">
    <property type="development level" value="Tbio"/>
</dbReference>
<dbReference type="PRO" id="PR:Q14684"/>
<dbReference type="Proteomes" id="UP000005640">
    <property type="component" value="Chromosome 21"/>
</dbReference>
<dbReference type="RNAct" id="Q14684">
    <property type="molecule type" value="protein"/>
</dbReference>
<dbReference type="Bgee" id="ENSG00000160208">
    <property type="expression patterns" value="Expressed in germinal epithelium of ovary and 204 other cell types or tissues"/>
</dbReference>
<dbReference type="GO" id="GO:0005694">
    <property type="term" value="C:chromosome"/>
    <property type="evidence" value="ECO:0000314"/>
    <property type="project" value="HPA"/>
</dbReference>
<dbReference type="GO" id="GO:0005829">
    <property type="term" value="C:cytosol"/>
    <property type="evidence" value="ECO:0007005"/>
    <property type="project" value="UniProtKB"/>
</dbReference>
<dbReference type="GO" id="GO:0000791">
    <property type="term" value="C:euchromatin"/>
    <property type="evidence" value="ECO:0007669"/>
    <property type="project" value="Ensembl"/>
</dbReference>
<dbReference type="GO" id="GO:0001652">
    <property type="term" value="C:granular component"/>
    <property type="evidence" value="ECO:0000314"/>
    <property type="project" value="UniProtKB"/>
</dbReference>
<dbReference type="GO" id="GO:0000792">
    <property type="term" value="C:heterochromatin"/>
    <property type="evidence" value="ECO:0007669"/>
    <property type="project" value="Ensembl"/>
</dbReference>
<dbReference type="GO" id="GO:0005730">
    <property type="term" value="C:nucleolus"/>
    <property type="evidence" value="ECO:0000314"/>
    <property type="project" value="HPA"/>
</dbReference>
<dbReference type="GO" id="GO:0005654">
    <property type="term" value="C:nucleoplasm"/>
    <property type="evidence" value="ECO:0000314"/>
    <property type="project" value="HPA"/>
</dbReference>
<dbReference type="GO" id="GO:0005634">
    <property type="term" value="C:nucleus"/>
    <property type="evidence" value="ECO:0007005"/>
    <property type="project" value="UniProtKB"/>
</dbReference>
<dbReference type="GO" id="GO:0030688">
    <property type="term" value="C:preribosome, small subunit precursor"/>
    <property type="evidence" value="ECO:0007669"/>
    <property type="project" value="InterPro"/>
</dbReference>
<dbReference type="GO" id="GO:0003723">
    <property type="term" value="F:RNA binding"/>
    <property type="evidence" value="ECO:0007005"/>
    <property type="project" value="UniProtKB"/>
</dbReference>
<dbReference type="GO" id="GO:0003713">
    <property type="term" value="F:transcription coactivator activity"/>
    <property type="evidence" value="ECO:0000315"/>
    <property type="project" value="UniProtKB"/>
</dbReference>
<dbReference type="GO" id="GO:0006915">
    <property type="term" value="P:apoptotic process"/>
    <property type="evidence" value="ECO:0007669"/>
    <property type="project" value="UniProtKB-KW"/>
</dbReference>
<dbReference type="GO" id="GO:0098586">
    <property type="term" value="P:cellular response to virus"/>
    <property type="evidence" value="ECO:0000314"/>
    <property type="project" value="UniProtKB"/>
</dbReference>
<dbReference type="GO" id="GO:0006397">
    <property type="term" value="P:mRNA processing"/>
    <property type="evidence" value="ECO:0007669"/>
    <property type="project" value="UniProtKB-KW"/>
</dbReference>
<dbReference type="GO" id="GO:0034260">
    <property type="term" value="P:negative regulation of GTPase activity"/>
    <property type="evidence" value="ECO:0000250"/>
    <property type="project" value="UniProtKB"/>
</dbReference>
<dbReference type="GO" id="GO:0043923">
    <property type="term" value="P:positive regulation by host of viral transcription"/>
    <property type="evidence" value="ECO:0000315"/>
    <property type="project" value="UniProtKB"/>
</dbReference>
<dbReference type="GO" id="GO:0043065">
    <property type="term" value="P:positive regulation of apoptotic process"/>
    <property type="evidence" value="ECO:0000315"/>
    <property type="project" value="UniProtKB"/>
</dbReference>
<dbReference type="GO" id="GO:0045944">
    <property type="term" value="P:positive regulation of transcription by RNA polymerase II"/>
    <property type="evidence" value="ECO:0000315"/>
    <property type="project" value="UniProtKB"/>
</dbReference>
<dbReference type="GO" id="GO:0043484">
    <property type="term" value="P:regulation of RNA splicing"/>
    <property type="evidence" value="ECO:0000250"/>
    <property type="project" value="UniProtKB"/>
</dbReference>
<dbReference type="GO" id="GO:0008380">
    <property type="term" value="P:RNA splicing"/>
    <property type="evidence" value="ECO:0007669"/>
    <property type="project" value="UniProtKB-KW"/>
</dbReference>
<dbReference type="GO" id="GO:0006364">
    <property type="term" value="P:rRNA processing"/>
    <property type="evidence" value="ECO:0007669"/>
    <property type="project" value="InterPro"/>
</dbReference>
<dbReference type="InterPro" id="IPR010301">
    <property type="entry name" value="RRP1"/>
</dbReference>
<dbReference type="PANTHER" id="PTHR13026">
    <property type="entry name" value="NNP-1 PROTEIN NOVEL NUCLEAR PROTEIN 1 NOP52"/>
    <property type="match status" value="1"/>
</dbReference>
<dbReference type="PANTHER" id="PTHR13026:SF2">
    <property type="entry name" value="RIBOSOMAL RNA PROCESSING PROTEIN 1 HOMOLOG B"/>
    <property type="match status" value="1"/>
</dbReference>
<dbReference type="Pfam" id="PF05997">
    <property type="entry name" value="Nop52"/>
    <property type="match status" value="1"/>
</dbReference>
<name>RRP1B_HUMAN</name>
<proteinExistence type="evidence at protein level"/>